<comment type="function">
    <text evidence="1">Catalyzes the hydrolytic cleavage of the carbon-nitrogen bond in imidazolone-5-propanoate to yield N-formimidoyl-L-glutamate. It is the third step in the universal histidine degradation pathway.</text>
</comment>
<comment type="catalytic activity">
    <reaction evidence="1">
        <text>4-imidazolone-5-propanoate + H2O = N-formimidoyl-L-glutamate</text>
        <dbReference type="Rhea" id="RHEA:23660"/>
        <dbReference type="ChEBI" id="CHEBI:15377"/>
        <dbReference type="ChEBI" id="CHEBI:58928"/>
        <dbReference type="ChEBI" id="CHEBI:77893"/>
        <dbReference type="EC" id="3.5.2.7"/>
    </reaction>
</comment>
<comment type="cofactor">
    <cofactor evidence="1">
        <name>Zn(2+)</name>
        <dbReference type="ChEBI" id="CHEBI:29105"/>
    </cofactor>
    <cofactor evidence="6 7">
        <name>Fe(3+)</name>
        <dbReference type="ChEBI" id="CHEBI:29034"/>
    </cofactor>
    <text evidence="1">Binds 1 zinc or iron ion per subunit.</text>
</comment>
<comment type="pathway">
    <text evidence="1">Amino-acid degradation; L-histidine degradation into L-glutamate; N-formimidoyl-L-glutamate from L-histidine: step 3/3.</text>
</comment>
<comment type="subunit">
    <text evidence="2">Monomer. Forms a tightly packed homodimer in the crystal, but this seems to be an artifact of crystallization.</text>
</comment>
<comment type="subcellular location">
    <subcellularLocation>
        <location evidence="1">Cytoplasm</location>
    </subcellularLocation>
</comment>
<comment type="similarity">
    <text evidence="1">Belongs to the metallo-dependent hydrolases superfamily. HutI family.</text>
</comment>
<feature type="chain" id="PRO_0000160942" description="Imidazolonepropionase">
    <location>
        <begin position="1"/>
        <end position="419"/>
    </location>
</feature>
<feature type="binding site" evidence="2 3 8 9">
    <location>
        <position position="84"/>
    </location>
    <ligand>
        <name>Fe(3+)</name>
        <dbReference type="ChEBI" id="CHEBI:29034"/>
    </ligand>
</feature>
<feature type="binding site" evidence="1">
    <location>
        <position position="84"/>
    </location>
    <ligand>
        <name>Zn(2+)</name>
        <dbReference type="ChEBI" id="CHEBI:29105"/>
    </ligand>
</feature>
<feature type="binding site" evidence="2 3 8 9">
    <location>
        <position position="86"/>
    </location>
    <ligand>
        <name>Fe(3+)</name>
        <dbReference type="ChEBI" id="CHEBI:29034"/>
    </ligand>
</feature>
<feature type="binding site" evidence="1">
    <location>
        <position position="86"/>
    </location>
    <ligand>
        <name>Zn(2+)</name>
        <dbReference type="ChEBI" id="CHEBI:29105"/>
    </ligand>
</feature>
<feature type="binding site" evidence="1">
    <location>
        <position position="93"/>
    </location>
    <ligand>
        <name>4-imidazolone-5-propanoate</name>
        <dbReference type="ChEBI" id="CHEBI:77893"/>
    </ligand>
</feature>
<feature type="binding site" evidence="1">
    <location>
        <position position="156"/>
    </location>
    <ligand>
        <name>4-imidazolone-5-propanoate</name>
        <dbReference type="ChEBI" id="CHEBI:77893"/>
    </ligand>
</feature>
<feature type="binding site" evidence="3 9">
    <location>
        <position position="156"/>
    </location>
    <ligand>
        <name>N-formimidoyl-L-glutamate</name>
        <dbReference type="ChEBI" id="CHEBI:58928"/>
    </ligand>
</feature>
<feature type="binding site" evidence="1">
    <location>
        <position position="189"/>
    </location>
    <ligand>
        <name>4-imidazolone-5-propanoate</name>
        <dbReference type="ChEBI" id="CHEBI:77893"/>
    </ligand>
</feature>
<feature type="binding site" evidence="2 3 8 9">
    <location>
        <position position="254"/>
    </location>
    <ligand>
        <name>Fe(3+)</name>
        <dbReference type="ChEBI" id="CHEBI:29034"/>
    </ligand>
</feature>
<feature type="binding site" evidence="1">
    <location>
        <position position="254"/>
    </location>
    <ligand>
        <name>Zn(2+)</name>
        <dbReference type="ChEBI" id="CHEBI:29105"/>
    </ligand>
</feature>
<feature type="binding site" evidence="1">
    <location>
        <position position="257"/>
    </location>
    <ligand>
        <name>4-imidazolone-5-propanoate</name>
        <dbReference type="ChEBI" id="CHEBI:77893"/>
    </ligand>
</feature>
<feature type="binding site" evidence="2 3 8 9">
    <location>
        <position position="329"/>
    </location>
    <ligand>
        <name>Fe(3+)</name>
        <dbReference type="ChEBI" id="CHEBI:29034"/>
    </ligand>
</feature>
<feature type="binding site" evidence="1">
    <location>
        <position position="329"/>
    </location>
    <ligand>
        <name>Zn(2+)</name>
        <dbReference type="ChEBI" id="CHEBI:29105"/>
    </ligand>
</feature>
<feature type="binding site" evidence="3 9">
    <location>
        <position position="331"/>
    </location>
    <ligand>
        <name>N-formimidoyl-L-glutamate</name>
        <dbReference type="ChEBI" id="CHEBI:58928"/>
    </ligand>
</feature>
<feature type="binding site" evidence="3 9">
    <location>
        <position position="333"/>
    </location>
    <ligand>
        <name>N-formimidoyl-L-glutamate</name>
        <dbReference type="ChEBI" id="CHEBI:58928"/>
    </ligand>
</feature>
<feature type="binding site" evidence="1">
    <location>
        <position position="334"/>
    </location>
    <ligand>
        <name>4-imidazolone-5-propanoate</name>
        <dbReference type="ChEBI" id="CHEBI:77893"/>
    </ligand>
</feature>
<feature type="strand" evidence="10">
    <location>
        <begin position="16"/>
        <end position="25"/>
    </location>
</feature>
<feature type="strand" evidence="10">
    <location>
        <begin position="36"/>
        <end position="45"/>
    </location>
</feature>
<feature type="strand" evidence="10">
    <location>
        <begin position="48"/>
        <end position="54"/>
    </location>
</feature>
<feature type="helix" evidence="10">
    <location>
        <begin position="60"/>
        <end position="62"/>
    </location>
</feature>
<feature type="strand" evidence="10">
    <location>
        <begin position="66"/>
        <end position="70"/>
    </location>
</feature>
<feature type="strand" evidence="10">
    <location>
        <begin position="75"/>
        <end position="78"/>
    </location>
</feature>
<feature type="strand" evidence="10">
    <location>
        <begin position="80"/>
        <end position="82"/>
    </location>
</feature>
<feature type="helix" evidence="10">
    <location>
        <begin position="94"/>
        <end position="101"/>
    </location>
</feature>
<feature type="helix" evidence="10">
    <location>
        <begin position="106"/>
        <end position="111"/>
    </location>
</feature>
<feature type="helix" evidence="10">
    <location>
        <begin position="116"/>
        <end position="125"/>
    </location>
</feature>
<feature type="helix" evidence="10">
    <location>
        <begin position="128"/>
        <end position="143"/>
    </location>
</feature>
<feature type="turn" evidence="10">
    <location>
        <begin position="144"/>
        <end position="146"/>
    </location>
</feature>
<feature type="strand" evidence="10">
    <location>
        <begin position="147"/>
        <end position="153"/>
    </location>
</feature>
<feature type="helix" evidence="10">
    <location>
        <begin position="160"/>
        <end position="173"/>
    </location>
</feature>
<feature type="turn" evidence="10">
    <location>
        <begin position="174"/>
        <end position="176"/>
    </location>
</feature>
<feature type="strand" evidence="10">
    <location>
        <begin position="180"/>
        <end position="185"/>
    </location>
</feature>
<feature type="helix" evidence="10">
    <location>
        <begin position="193"/>
        <end position="195"/>
    </location>
</feature>
<feature type="helix" evidence="10">
    <location>
        <begin position="199"/>
        <end position="205"/>
    </location>
</feature>
<feature type="helix" evidence="10">
    <location>
        <begin position="207"/>
        <end position="216"/>
    </location>
</feature>
<feature type="strand" evidence="10">
    <location>
        <begin position="221"/>
        <end position="223"/>
    </location>
</feature>
<feature type="strand" evidence="10">
    <location>
        <begin position="226"/>
        <end position="228"/>
    </location>
</feature>
<feature type="helix" evidence="10">
    <location>
        <begin position="234"/>
        <end position="246"/>
    </location>
</feature>
<feature type="strand" evidence="10">
    <location>
        <begin position="251"/>
        <end position="259"/>
    </location>
</feature>
<feature type="helix" evidence="10">
    <location>
        <begin position="263"/>
        <end position="269"/>
    </location>
</feature>
<feature type="strand" evidence="10">
    <location>
        <begin position="273"/>
        <end position="277"/>
    </location>
</feature>
<feature type="helix" evidence="10">
    <location>
        <begin position="283"/>
        <end position="292"/>
    </location>
</feature>
<feature type="strand" evidence="10">
    <location>
        <begin position="295"/>
        <end position="298"/>
    </location>
</feature>
<feature type="helix" evidence="10">
    <location>
        <begin position="300"/>
        <end position="306"/>
    </location>
</feature>
<feature type="helix" evidence="10">
    <location>
        <begin position="314"/>
        <end position="320"/>
    </location>
</feature>
<feature type="strand" evidence="10">
    <location>
        <begin position="324"/>
        <end position="326"/>
    </location>
</feature>
<feature type="strand" evidence="10">
    <location>
        <begin position="332"/>
        <end position="334"/>
    </location>
</feature>
<feature type="helix" evidence="10">
    <location>
        <begin position="340"/>
        <end position="351"/>
    </location>
</feature>
<feature type="helix" evidence="10">
    <location>
        <begin position="355"/>
        <end position="361"/>
    </location>
</feature>
<feature type="helix" evidence="10">
    <location>
        <begin position="364"/>
        <end position="369"/>
    </location>
</feature>
<feature type="turn" evidence="10">
    <location>
        <begin position="373"/>
        <end position="375"/>
    </location>
</feature>
<feature type="strand" evidence="10">
    <location>
        <begin position="376"/>
        <end position="378"/>
    </location>
</feature>
<feature type="strand" evidence="10">
    <location>
        <begin position="387"/>
        <end position="390"/>
    </location>
</feature>
<feature type="helix" evidence="10">
    <location>
        <begin position="397"/>
        <end position="400"/>
    </location>
</feature>
<feature type="strand" evidence="10">
    <location>
        <begin position="407"/>
        <end position="412"/>
    </location>
</feature>
<name>HUTI_AGRFC</name>
<sequence length="419" mass="44400">MPGNNSAKGTATGNATALWRNAQLATLNPAMDGIGAVENAVIAVRNGRIAFAGPESDLPDDLSTADETTDCGGRWITPALIDCHTHLVFGGNRAMEFEMRLNGATYEEIAKAGGGIVSSVRDTRALSDEVLVAQALPRLDTLLSEGVSTIEIKSGYGLDIETELKMLRVARRLETLRPVRIVTSYLAAHATPADYKGRNADYITDVVLPGLEKAHAEGLADAVDGFCEGIAFSVKEIDRVFAAAQQRGLPVKLHAEQLSNLGGAELAASYNALSADHLEYLDETGAKALAKAGTVAVLLPGAFYALREKQLPPVQALRDAGAEIALATDCNPGTSPLTSLLLTMNMGATLFRMTVEECLTATTRNAAKALGLLAETGTLEAGKSADFAIWDIERPAELVYRIGFNPLHARIFKGQKVSP</sequence>
<dbReference type="EC" id="3.5.2.7" evidence="1"/>
<dbReference type="EMBL" id="AE007870">
    <property type="protein sequence ID" value="AAK89486.2"/>
    <property type="molecule type" value="Genomic_DNA"/>
</dbReference>
<dbReference type="PIR" id="AH3040">
    <property type="entry name" value="AH3040"/>
</dbReference>
<dbReference type="PIR" id="D98245">
    <property type="entry name" value="D98245"/>
</dbReference>
<dbReference type="RefSeq" id="NP_356701.2">
    <property type="nucleotide sequence ID" value="NC_003063.2"/>
</dbReference>
<dbReference type="RefSeq" id="WP_010973444.1">
    <property type="nucleotide sequence ID" value="NC_003063.2"/>
</dbReference>
<dbReference type="PDB" id="2GOK">
    <property type="method" value="X-ray"/>
    <property type="resolution" value="1.87 A"/>
    <property type="chains" value="A/B=2-419"/>
</dbReference>
<dbReference type="PDB" id="2PUZ">
    <property type="method" value="X-ray"/>
    <property type="resolution" value="1.83 A"/>
    <property type="chains" value="A/B=1-419"/>
</dbReference>
<dbReference type="PDBsum" id="2GOK"/>
<dbReference type="PDBsum" id="2PUZ"/>
<dbReference type="SMR" id="Q8U8Z6"/>
<dbReference type="STRING" id="176299.Atu3934"/>
<dbReference type="MEROPS" id="M38.980"/>
<dbReference type="EnsemblBacteria" id="AAK89486">
    <property type="protein sequence ID" value="AAK89486"/>
    <property type="gene ID" value="Atu3934"/>
</dbReference>
<dbReference type="GeneID" id="1135808"/>
<dbReference type="KEGG" id="atu:Atu3934"/>
<dbReference type="PATRIC" id="fig|176299.10.peg.3757"/>
<dbReference type="eggNOG" id="COG1228">
    <property type="taxonomic scope" value="Bacteria"/>
</dbReference>
<dbReference type="HOGENOM" id="CLU_041647_0_0_5"/>
<dbReference type="OrthoDB" id="9776455at2"/>
<dbReference type="PhylomeDB" id="Q8U8Z6"/>
<dbReference type="BioCyc" id="AGRO:ATU3934-MONOMER"/>
<dbReference type="BRENDA" id="3.5.2.7">
    <property type="organism ID" value="200"/>
</dbReference>
<dbReference type="UniPathway" id="UPA00379">
    <property type="reaction ID" value="UER00551"/>
</dbReference>
<dbReference type="EvolutionaryTrace" id="Q8U8Z6"/>
<dbReference type="Proteomes" id="UP000000813">
    <property type="component" value="Chromosome linear"/>
</dbReference>
<dbReference type="GO" id="GO:0005737">
    <property type="term" value="C:cytoplasm"/>
    <property type="evidence" value="ECO:0007669"/>
    <property type="project" value="UniProtKB-SubCell"/>
</dbReference>
<dbReference type="GO" id="GO:0050480">
    <property type="term" value="F:imidazolonepropionase activity"/>
    <property type="evidence" value="ECO:0007669"/>
    <property type="project" value="UniProtKB-UniRule"/>
</dbReference>
<dbReference type="GO" id="GO:0005506">
    <property type="term" value="F:iron ion binding"/>
    <property type="evidence" value="ECO:0007669"/>
    <property type="project" value="UniProtKB-UniRule"/>
</dbReference>
<dbReference type="GO" id="GO:0008270">
    <property type="term" value="F:zinc ion binding"/>
    <property type="evidence" value="ECO:0007669"/>
    <property type="project" value="UniProtKB-UniRule"/>
</dbReference>
<dbReference type="GO" id="GO:0019556">
    <property type="term" value="P:L-histidine catabolic process to glutamate and formamide"/>
    <property type="evidence" value="ECO:0007669"/>
    <property type="project" value="UniProtKB-UniPathway"/>
</dbReference>
<dbReference type="GO" id="GO:0019557">
    <property type="term" value="P:L-histidine catabolic process to glutamate and formate"/>
    <property type="evidence" value="ECO:0007669"/>
    <property type="project" value="UniProtKB-UniPathway"/>
</dbReference>
<dbReference type="CDD" id="cd01296">
    <property type="entry name" value="Imidazolone-5PH"/>
    <property type="match status" value="1"/>
</dbReference>
<dbReference type="FunFam" id="3.20.20.140:FF:000007">
    <property type="entry name" value="Imidazolonepropionase"/>
    <property type="match status" value="1"/>
</dbReference>
<dbReference type="Gene3D" id="3.20.20.140">
    <property type="entry name" value="Metal-dependent hydrolases"/>
    <property type="match status" value="1"/>
</dbReference>
<dbReference type="Gene3D" id="2.30.40.10">
    <property type="entry name" value="Urease, subunit C, domain 1"/>
    <property type="match status" value="1"/>
</dbReference>
<dbReference type="HAMAP" id="MF_00372">
    <property type="entry name" value="HutI"/>
    <property type="match status" value="1"/>
</dbReference>
<dbReference type="InterPro" id="IPR006680">
    <property type="entry name" value="Amidohydro-rel"/>
</dbReference>
<dbReference type="InterPro" id="IPR005920">
    <property type="entry name" value="HutI"/>
</dbReference>
<dbReference type="InterPro" id="IPR011059">
    <property type="entry name" value="Metal-dep_hydrolase_composite"/>
</dbReference>
<dbReference type="InterPro" id="IPR032466">
    <property type="entry name" value="Metal_Hydrolase"/>
</dbReference>
<dbReference type="NCBIfam" id="TIGR01224">
    <property type="entry name" value="hutI"/>
    <property type="match status" value="1"/>
</dbReference>
<dbReference type="PANTHER" id="PTHR42752">
    <property type="entry name" value="IMIDAZOLONEPROPIONASE"/>
    <property type="match status" value="1"/>
</dbReference>
<dbReference type="PANTHER" id="PTHR42752:SF1">
    <property type="entry name" value="IMIDAZOLONEPROPIONASE-RELATED"/>
    <property type="match status" value="1"/>
</dbReference>
<dbReference type="Pfam" id="PF01979">
    <property type="entry name" value="Amidohydro_1"/>
    <property type="match status" value="1"/>
</dbReference>
<dbReference type="SUPFAM" id="SSF51338">
    <property type="entry name" value="Composite domain of metallo-dependent hydrolases"/>
    <property type="match status" value="1"/>
</dbReference>
<dbReference type="SUPFAM" id="SSF51556">
    <property type="entry name" value="Metallo-dependent hydrolases"/>
    <property type="match status" value="1"/>
</dbReference>
<gene>
    <name evidence="1 5" type="primary">hutI</name>
    <name type="ordered locus">Atu3934</name>
    <name type="ORF">AGR_L_1824</name>
</gene>
<proteinExistence type="evidence at protein level"/>
<keyword id="KW-0002">3D-structure</keyword>
<keyword id="KW-0963">Cytoplasm</keyword>
<keyword id="KW-0369">Histidine metabolism</keyword>
<keyword id="KW-0378">Hydrolase</keyword>
<keyword id="KW-0408">Iron</keyword>
<keyword id="KW-0479">Metal-binding</keyword>
<keyword id="KW-1185">Reference proteome</keyword>
<keyword id="KW-0862">Zinc</keyword>
<reference key="1">
    <citation type="journal article" date="2001" name="Science">
        <title>The genome of the natural genetic engineer Agrobacterium tumefaciens C58.</title>
        <authorList>
            <person name="Wood D.W."/>
            <person name="Setubal J.C."/>
            <person name="Kaul R."/>
            <person name="Monks D.E."/>
            <person name="Kitajima J.P."/>
            <person name="Okura V.K."/>
            <person name="Zhou Y."/>
            <person name="Chen L."/>
            <person name="Wood G.E."/>
            <person name="Almeida N.F. Jr."/>
            <person name="Woo L."/>
            <person name="Chen Y."/>
            <person name="Paulsen I.T."/>
            <person name="Eisen J.A."/>
            <person name="Karp P.D."/>
            <person name="Bovee D. Sr."/>
            <person name="Chapman P."/>
            <person name="Clendenning J."/>
            <person name="Deatherage G."/>
            <person name="Gillet W."/>
            <person name="Grant C."/>
            <person name="Kutyavin T."/>
            <person name="Levy R."/>
            <person name="Li M.-J."/>
            <person name="McClelland E."/>
            <person name="Palmieri A."/>
            <person name="Raymond C."/>
            <person name="Rouse G."/>
            <person name="Saenphimmachak C."/>
            <person name="Wu Z."/>
            <person name="Romero P."/>
            <person name="Gordon D."/>
            <person name="Zhang S."/>
            <person name="Yoo H."/>
            <person name="Tao Y."/>
            <person name="Biddle P."/>
            <person name="Jung M."/>
            <person name="Krespan W."/>
            <person name="Perry M."/>
            <person name="Gordon-Kamm B."/>
            <person name="Liao L."/>
            <person name="Kim S."/>
            <person name="Hendrick C."/>
            <person name="Zhao Z.-Y."/>
            <person name="Dolan M."/>
            <person name="Chumley F."/>
            <person name="Tingey S.V."/>
            <person name="Tomb J.-F."/>
            <person name="Gordon M.P."/>
            <person name="Olson M.V."/>
            <person name="Nester E.W."/>
        </authorList>
    </citation>
    <scope>NUCLEOTIDE SEQUENCE [LARGE SCALE GENOMIC DNA]</scope>
    <source>
        <strain>C58 / ATCC 33970</strain>
    </source>
</reference>
<reference key="2">
    <citation type="journal article" date="2001" name="Science">
        <title>Genome sequence of the plant pathogen and biotechnology agent Agrobacterium tumefaciens C58.</title>
        <authorList>
            <person name="Goodner B."/>
            <person name="Hinkle G."/>
            <person name="Gattung S."/>
            <person name="Miller N."/>
            <person name="Blanchard M."/>
            <person name="Qurollo B."/>
            <person name="Goldman B.S."/>
            <person name="Cao Y."/>
            <person name="Askenazi M."/>
            <person name="Halling C."/>
            <person name="Mullin L."/>
            <person name="Houmiel K."/>
            <person name="Gordon J."/>
            <person name="Vaudin M."/>
            <person name="Iartchouk O."/>
            <person name="Epp A."/>
            <person name="Liu F."/>
            <person name="Wollam C."/>
            <person name="Allinger M."/>
            <person name="Doughty D."/>
            <person name="Scott C."/>
            <person name="Lappas C."/>
            <person name="Markelz B."/>
            <person name="Flanagan C."/>
            <person name="Crowell C."/>
            <person name="Gurson J."/>
            <person name="Lomo C."/>
            <person name="Sear C."/>
            <person name="Strub G."/>
            <person name="Cielo C."/>
            <person name="Slater S."/>
        </authorList>
    </citation>
    <scope>NUCLEOTIDE SEQUENCE [LARGE SCALE GENOMIC DNA]</scope>
    <source>
        <strain>C58 / ATCC 33970</strain>
    </source>
</reference>
<reference evidence="8" key="3">
    <citation type="journal article" date="2007" name="Proteins">
        <title>X-ray structure of imidazolonepropionase from Agrobacterium tumefaciens at 1.87 A resolution.</title>
        <authorList>
            <person name="Tyagi R."/>
            <person name="Kumaran D."/>
            <person name="Burley S.K."/>
            <person name="Swaminathan S."/>
        </authorList>
    </citation>
    <scope>X-RAY CRYSTALLOGRAPHY (1.87 ANGSTROMS) IN COMPLEX WITH IRON IONS</scope>
    <scope>SUBUNIT</scope>
</reference>
<reference evidence="9" key="4">
    <citation type="journal article" date="2008" name="Biochemistry">
        <title>A common catalytic mechanism for proteins of the HutI family.</title>
        <authorList>
            <person name="Tyagi R."/>
            <person name="Eswaramoorthy S."/>
            <person name="Burley S.K."/>
            <person name="Raushel F.M."/>
            <person name="Swaminathan S."/>
        </authorList>
    </citation>
    <scope>X-RAY CRYSTALLOGRAPHY (1.83 ANGSTROMS) IN COMPLEX WITH N-FORMIMIDOYL-L-GLUTAMATE AND IRON IONS</scope>
</reference>
<protein>
    <recommendedName>
        <fullName evidence="1 4 5">Imidazolonepropionase</fullName>
        <ecNumber evidence="1">3.5.2.7</ecNumber>
    </recommendedName>
    <alternativeName>
        <fullName evidence="5">Imidazolone-5-propanoate hydrolase</fullName>
    </alternativeName>
    <alternativeName>
        <fullName evidence="1">Imidazolone-5-propionate hydrolase</fullName>
    </alternativeName>
</protein>
<accession>Q8U8Z6</accession>
<organism>
    <name type="scientific">Agrobacterium fabrum (strain C58 / ATCC 33970)</name>
    <name type="common">Agrobacterium tumefaciens (strain C58)</name>
    <dbReference type="NCBI Taxonomy" id="176299"/>
    <lineage>
        <taxon>Bacteria</taxon>
        <taxon>Pseudomonadati</taxon>
        <taxon>Pseudomonadota</taxon>
        <taxon>Alphaproteobacteria</taxon>
        <taxon>Hyphomicrobiales</taxon>
        <taxon>Rhizobiaceae</taxon>
        <taxon>Rhizobium/Agrobacterium group</taxon>
        <taxon>Agrobacterium</taxon>
        <taxon>Agrobacterium tumefaciens complex</taxon>
    </lineage>
</organism>
<evidence type="ECO:0000255" key="1">
    <source>
        <dbReference type="HAMAP-Rule" id="MF_00372"/>
    </source>
</evidence>
<evidence type="ECO:0000269" key="2">
    <source>
    </source>
</evidence>
<evidence type="ECO:0000269" key="3">
    <source>
    </source>
</evidence>
<evidence type="ECO:0000303" key="4">
    <source>
    </source>
</evidence>
<evidence type="ECO:0000303" key="5">
    <source>
    </source>
</evidence>
<evidence type="ECO:0000305" key="6">
    <source>
    </source>
</evidence>
<evidence type="ECO:0000305" key="7">
    <source>
    </source>
</evidence>
<evidence type="ECO:0007744" key="8">
    <source>
        <dbReference type="PDB" id="2GOK"/>
    </source>
</evidence>
<evidence type="ECO:0007744" key="9">
    <source>
        <dbReference type="PDB" id="2PUZ"/>
    </source>
</evidence>
<evidence type="ECO:0007829" key="10">
    <source>
        <dbReference type="PDB" id="2PUZ"/>
    </source>
</evidence>